<keyword id="KW-0067">ATP-binding</keyword>
<keyword id="KW-0418">Kinase</keyword>
<keyword id="KW-0460">Magnesium</keyword>
<keyword id="KW-0479">Metal-binding</keyword>
<keyword id="KW-0547">Nucleotide-binding</keyword>
<keyword id="KW-0597">Phosphoprotein</keyword>
<keyword id="KW-1185">Reference proteome</keyword>
<keyword id="KW-0808">Transferase</keyword>
<comment type="function">
    <text evidence="1">Catalyzes the reversible transfer of the terminal phosphate of ATP to form a long-chain polyphosphate (polyP).</text>
</comment>
<comment type="catalytic activity">
    <reaction evidence="1">
        <text>[phosphate](n) + ATP = [phosphate](n+1) + ADP</text>
        <dbReference type="Rhea" id="RHEA:19573"/>
        <dbReference type="Rhea" id="RHEA-COMP:9859"/>
        <dbReference type="Rhea" id="RHEA-COMP:14280"/>
        <dbReference type="ChEBI" id="CHEBI:16838"/>
        <dbReference type="ChEBI" id="CHEBI:30616"/>
        <dbReference type="ChEBI" id="CHEBI:456216"/>
        <dbReference type="EC" id="2.7.4.1"/>
    </reaction>
</comment>
<comment type="cofactor">
    <cofactor evidence="1">
        <name>Mg(2+)</name>
        <dbReference type="ChEBI" id="CHEBI:18420"/>
    </cofactor>
</comment>
<comment type="PTM">
    <text evidence="1">An intermediate of this reaction is the autophosphorylated ppk in which a phosphate is covalently linked to a histidine residue through a N-P bond.</text>
</comment>
<comment type="similarity">
    <text evidence="1">Belongs to the polyphosphate kinase 1 (PPK1) family.</text>
</comment>
<organism>
    <name type="scientific">Lactiplantibacillus plantarum (strain ATCC BAA-793 / NCIMB 8826 / WCFS1)</name>
    <name type="common">Lactobacillus plantarum</name>
    <dbReference type="NCBI Taxonomy" id="220668"/>
    <lineage>
        <taxon>Bacteria</taxon>
        <taxon>Bacillati</taxon>
        <taxon>Bacillota</taxon>
        <taxon>Bacilli</taxon>
        <taxon>Lactobacillales</taxon>
        <taxon>Lactobacillaceae</taxon>
        <taxon>Lactiplantibacillus</taxon>
    </lineage>
</organism>
<sequence length="718" mass="82227">MNYYKESYYTNRELSWLDFNYRVLDEARDKDNPLLERVRFLGITQSNLDEFFTVRVASLRKLMSVNYTKPDPAGLTAADQVSAISDKAHEMVKRQYNTLNRSLLPLLEQHAIHLLSMADLNEEQHAFVKNYFDDELYPALTPMADDSSRPFPFIGNNTLNIALRIYKNGDKKDRKFATVQVPDVFPRVVVLPGAPNQFILIEEIIKAFVGSLFINYTVKETSCYRVMRDLDLDVAEEDTSDLLKEVQKQLKMRERGKVMRLEVEKSMSKHQRTRLAKALGINESALYVINGPLNLTFLSKLVKAVQGHEDLNYPKYHAYYPAKYRERSIFDLIKDHDILMQYPYDDFKPVVDFIHEAAEDEDVLAIKMTLYRVSADSPIIKYLGQAAQNGKQVTVLVEVKARFDEENNVHWAKKLEEMGCHVIYGLIGLKTHCKLALVVRRENEGIKRYMHMGTGNYNDVTAHFYTDMGLFTADTDMGIDASNIFNMLSGYSEPPYFHKLHISPDGIRDFINEKLDDEIAIAKAGQPAVVKMKMNSLSDPQIISKLYEASHAGVKIQLIIRGICCLRTGIKGISDNIEVHSIIGRLLEHSRIYYFSNDGEPQIYLSSADMMTRNLNRRVELLFPLLQPEISHRAMTIFETMWADTVKTRILQPDNTYARVDGRGLEVLDSQAEFIREAEQAVKADHGDTTPTSNAHQFIPMMSPKNEPDASDLDREDD</sequence>
<name>PPK1_LACPL</name>
<dbReference type="EC" id="2.7.4.1" evidence="1"/>
<dbReference type="EMBL" id="AL935263">
    <property type="protein sequence ID" value="CCC78296.1"/>
    <property type="molecule type" value="Genomic_DNA"/>
</dbReference>
<dbReference type="RefSeq" id="WP_003641095.1">
    <property type="nucleotide sequence ID" value="NC_004567.2"/>
</dbReference>
<dbReference type="RefSeq" id="YP_004888810.1">
    <property type="nucleotide sequence ID" value="NC_004567.2"/>
</dbReference>
<dbReference type="SMR" id="Q88YD2"/>
<dbReference type="STRING" id="220668.lp_0842"/>
<dbReference type="EnsemblBacteria" id="CCC78296">
    <property type="protein sequence ID" value="CCC78296"/>
    <property type="gene ID" value="lp_0842"/>
</dbReference>
<dbReference type="KEGG" id="lpl:lp_0842"/>
<dbReference type="PATRIC" id="fig|220668.9.peg.716"/>
<dbReference type="eggNOG" id="COG0855">
    <property type="taxonomic scope" value="Bacteria"/>
</dbReference>
<dbReference type="HOGENOM" id="CLU_009678_5_0_9"/>
<dbReference type="OrthoDB" id="9761456at2"/>
<dbReference type="PhylomeDB" id="Q88YD2"/>
<dbReference type="Proteomes" id="UP000000432">
    <property type="component" value="Chromosome"/>
</dbReference>
<dbReference type="GO" id="GO:0009358">
    <property type="term" value="C:polyphosphate kinase complex"/>
    <property type="evidence" value="ECO:0007669"/>
    <property type="project" value="InterPro"/>
</dbReference>
<dbReference type="GO" id="GO:0005524">
    <property type="term" value="F:ATP binding"/>
    <property type="evidence" value="ECO:0007669"/>
    <property type="project" value="UniProtKB-KW"/>
</dbReference>
<dbReference type="GO" id="GO:0046872">
    <property type="term" value="F:metal ion binding"/>
    <property type="evidence" value="ECO:0007669"/>
    <property type="project" value="UniProtKB-KW"/>
</dbReference>
<dbReference type="GO" id="GO:0008976">
    <property type="term" value="F:polyphosphate kinase activity"/>
    <property type="evidence" value="ECO:0007669"/>
    <property type="project" value="UniProtKB-UniRule"/>
</dbReference>
<dbReference type="GO" id="GO:0006799">
    <property type="term" value="P:polyphosphate biosynthetic process"/>
    <property type="evidence" value="ECO:0007669"/>
    <property type="project" value="UniProtKB-UniRule"/>
</dbReference>
<dbReference type="CDD" id="cd09165">
    <property type="entry name" value="PLDc_PaPPK1_C1_like"/>
    <property type="match status" value="1"/>
</dbReference>
<dbReference type="CDD" id="cd09168">
    <property type="entry name" value="PLDc_PaPPK1_C2_like"/>
    <property type="match status" value="1"/>
</dbReference>
<dbReference type="FunFam" id="3.30.870.10:FF:000001">
    <property type="entry name" value="Polyphosphate kinase"/>
    <property type="match status" value="1"/>
</dbReference>
<dbReference type="Gene3D" id="3.30.870.10">
    <property type="entry name" value="Endonuclease Chain A"/>
    <property type="match status" value="2"/>
</dbReference>
<dbReference type="Gene3D" id="3.30.1840.10">
    <property type="entry name" value="Polyphosphate kinase middle domain"/>
    <property type="match status" value="1"/>
</dbReference>
<dbReference type="Gene3D" id="1.20.58.310">
    <property type="entry name" value="Polyphosphate kinase N-terminal domain"/>
    <property type="match status" value="1"/>
</dbReference>
<dbReference type="HAMAP" id="MF_00347">
    <property type="entry name" value="Polyphosphate_kinase"/>
    <property type="match status" value="1"/>
</dbReference>
<dbReference type="InterPro" id="IPR003414">
    <property type="entry name" value="PP_kinase"/>
</dbReference>
<dbReference type="InterPro" id="IPR041108">
    <property type="entry name" value="PP_kinase_C_1"/>
</dbReference>
<dbReference type="InterPro" id="IPR024953">
    <property type="entry name" value="PP_kinase_middle"/>
</dbReference>
<dbReference type="InterPro" id="IPR036830">
    <property type="entry name" value="PP_kinase_middle_dom_sf"/>
</dbReference>
<dbReference type="InterPro" id="IPR025200">
    <property type="entry name" value="PPK_C_dom2"/>
</dbReference>
<dbReference type="InterPro" id="IPR025198">
    <property type="entry name" value="PPK_N_dom"/>
</dbReference>
<dbReference type="InterPro" id="IPR036832">
    <property type="entry name" value="PPK_N_dom_sf"/>
</dbReference>
<dbReference type="NCBIfam" id="TIGR03705">
    <property type="entry name" value="poly_P_kin"/>
    <property type="match status" value="1"/>
</dbReference>
<dbReference type="NCBIfam" id="NF003917">
    <property type="entry name" value="PRK05443.1-1"/>
    <property type="match status" value="1"/>
</dbReference>
<dbReference type="NCBIfam" id="NF003918">
    <property type="entry name" value="PRK05443.1-2"/>
    <property type="match status" value="1"/>
</dbReference>
<dbReference type="NCBIfam" id="NF003920">
    <property type="entry name" value="PRK05443.2-1"/>
    <property type="match status" value="1"/>
</dbReference>
<dbReference type="NCBIfam" id="NF003921">
    <property type="entry name" value="PRK05443.2-2"/>
    <property type="match status" value="1"/>
</dbReference>
<dbReference type="PANTHER" id="PTHR30218">
    <property type="entry name" value="POLYPHOSPHATE KINASE"/>
    <property type="match status" value="1"/>
</dbReference>
<dbReference type="PANTHER" id="PTHR30218:SF0">
    <property type="entry name" value="POLYPHOSPHATE KINASE"/>
    <property type="match status" value="1"/>
</dbReference>
<dbReference type="Pfam" id="PF02503">
    <property type="entry name" value="PP_kinase"/>
    <property type="match status" value="1"/>
</dbReference>
<dbReference type="Pfam" id="PF13090">
    <property type="entry name" value="PP_kinase_C"/>
    <property type="match status" value="1"/>
</dbReference>
<dbReference type="Pfam" id="PF17941">
    <property type="entry name" value="PP_kinase_C_1"/>
    <property type="match status" value="1"/>
</dbReference>
<dbReference type="Pfam" id="PF13089">
    <property type="entry name" value="PP_kinase_N"/>
    <property type="match status" value="1"/>
</dbReference>
<dbReference type="PIRSF" id="PIRSF015589">
    <property type="entry name" value="PP_kinase"/>
    <property type="match status" value="1"/>
</dbReference>
<dbReference type="SUPFAM" id="SSF56024">
    <property type="entry name" value="Phospholipase D/nuclease"/>
    <property type="match status" value="2"/>
</dbReference>
<dbReference type="SUPFAM" id="SSF143724">
    <property type="entry name" value="PHP14-like"/>
    <property type="match status" value="1"/>
</dbReference>
<dbReference type="SUPFAM" id="SSF140356">
    <property type="entry name" value="PPK N-terminal domain-like"/>
    <property type="match status" value="1"/>
</dbReference>
<reference key="1">
    <citation type="journal article" date="2003" name="Proc. Natl. Acad. Sci. U.S.A.">
        <title>Complete genome sequence of Lactobacillus plantarum WCFS1.</title>
        <authorList>
            <person name="Kleerebezem M."/>
            <person name="Boekhorst J."/>
            <person name="van Kranenburg R."/>
            <person name="Molenaar D."/>
            <person name="Kuipers O.P."/>
            <person name="Leer R."/>
            <person name="Tarchini R."/>
            <person name="Peters S.A."/>
            <person name="Sandbrink H.M."/>
            <person name="Fiers M.W.E.J."/>
            <person name="Stiekema W."/>
            <person name="Klein Lankhorst R.M."/>
            <person name="Bron P.A."/>
            <person name="Hoffer S.M."/>
            <person name="Nierop Groot M.N."/>
            <person name="Kerkhoven R."/>
            <person name="De Vries M."/>
            <person name="Ursing B."/>
            <person name="De Vos W.M."/>
            <person name="Siezen R.J."/>
        </authorList>
    </citation>
    <scope>NUCLEOTIDE SEQUENCE [LARGE SCALE GENOMIC DNA]</scope>
    <source>
        <strain>ATCC BAA-793 / NCIMB 8826 / WCFS1</strain>
    </source>
</reference>
<reference key="2">
    <citation type="journal article" date="2012" name="J. Bacteriol.">
        <title>Complete resequencing and reannotation of the Lactobacillus plantarum WCFS1 genome.</title>
        <authorList>
            <person name="Siezen R.J."/>
            <person name="Francke C."/>
            <person name="Renckens B."/>
            <person name="Boekhorst J."/>
            <person name="Wels M."/>
            <person name="Kleerebezem M."/>
            <person name="van Hijum S.A."/>
        </authorList>
    </citation>
    <scope>NUCLEOTIDE SEQUENCE [LARGE SCALE GENOMIC DNA]</scope>
    <scope>GENOME REANNOTATION</scope>
    <source>
        <strain>ATCC BAA-793 / NCIMB 8826 / WCFS1</strain>
    </source>
</reference>
<protein>
    <recommendedName>
        <fullName evidence="1">Polyphosphate kinase</fullName>
        <ecNumber evidence="1">2.7.4.1</ecNumber>
    </recommendedName>
    <alternativeName>
        <fullName evidence="1">ATP-polyphosphate phosphotransferase</fullName>
    </alternativeName>
    <alternativeName>
        <fullName evidence="1">Polyphosphoric acid kinase</fullName>
    </alternativeName>
</protein>
<accession>Q88YD2</accession>
<accession>F9UM57</accession>
<proteinExistence type="inferred from homology"/>
<evidence type="ECO:0000255" key="1">
    <source>
        <dbReference type="HAMAP-Rule" id="MF_00347"/>
    </source>
</evidence>
<evidence type="ECO:0000256" key="2">
    <source>
        <dbReference type="SAM" id="MobiDB-lite"/>
    </source>
</evidence>
<feature type="chain" id="PRO_0000128646" description="Polyphosphate kinase">
    <location>
        <begin position="1"/>
        <end position="718"/>
    </location>
</feature>
<feature type="region of interest" description="Disordered" evidence="2">
    <location>
        <begin position="683"/>
        <end position="718"/>
    </location>
</feature>
<feature type="compositionally biased region" description="Acidic residues" evidence="2">
    <location>
        <begin position="709"/>
        <end position="718"/>
    </location>
</feature>
<feature type="active site" description="Phosphohistidine intermediate" evidence="1">
    <location>
        <position position="432"/>
    </location>
</feature>
<feature type="binding site" evidence="1">
    <location>
        <position position="47"/>
    </location>
    <ligand>
        <name>ATP</name>
        <dbReference type="ChEBI" id="CHEBI:30616"/>
    </ligand>
</feature>
<feature type="binding site" evidence="1">
    <location>
        <position position="372"/>
    </location>
    <ligand>
        <name>Mg(2+)</name>
        <dbReference type="ChEBI" id="CHEBI:18420"/>
    </ligand>
</feature>
<feature type="binding site" evidence="1">
    <location>
        <position position="402"/>
    </location>
    <ligand>
        <name>Mg(2+)</name>
        <dbReference type="ChEBI" id="CHEBI:18420"/>
    </ligand>
</feature>
<feature type="binding site" evidence="1">
    <location>
        <position position="465"/>
    </location>
    <ligand>
        <name>ATP</name>
        <dbReference type="ChEBI" id="CHEBI:30616"/>
    </ligand>
</feature>
<feature type="binding site" evidence="1">
    <location>
        <position position="561"/>
    </location>
    <ligand>
        <name>ATP</name>
        <dbReference type="ChEBI" id="CHEBI:30616"/>
    </ligand>
</feature>
<feature type="binding site" evidence="1">
    <location>
        <position position="589"/>
    </location>
    <ligand>
        <name>ATP</name>
        <dbReference type="ChEBI" id="CHEBI:30616"/>
    </ligand>
</feature>
<gene>
    <name evidence="1" type="primary">ppk</name>
    <name type="ordered locus">lp_0842</name>
</gene>